<comment type="function">
    <text evidence="1">Required for formate dehydrogenase (FDH) activity. Acts as a sulfur carrier protein that transfers sulfur from IscS to the molybdenum cofactor prior to its insertion into FDH.</text>
</comment>
<comment type="subcellular location">
    <subcellularLocation>
        <location evidence="1">Cytoplasm</location>
    </subcellularLocation>
</comment>
<comment type="similarity">
    <text evidence="1">Belongs to the FdhD family.</text>
</comment>
<protein>
    <recommendedName>
        <fullName evidence="1">Sulfur carrier protein FdhD</fullName>
    </recommendedName>
</protein>
<evidence type="ECO:0000255" key="1">
    <source>
        <dbReference type="HAMAP-Rule" id="MF_00187"/>
    </source>
</evidence>
<organism>
    <name type="scientific">Staphylococcus aureus (strain USA300 / TCH1516)</name>
    <dbReference type="NCBI Taxonomy" id="451516"/>
    <lineage>
        <taxon>Bacteria</taxon>
        <taxon>Bacillati</taxon>
        <taxon>Bacillota</taxon>
        <taxon>Bacilli</taxon>
        <taxon>Bacillales</taxon>
        <taxon>Staphylococcaceae</taxon>
        <taxon>Staphylococcus</taxon>
    </lineage>
</organism>
<feature type="chain" id="PRO_1000077439" description="Sulfur carrier protein FdhD">
    <location>
        <begin position="1"/>
        <end position="265"/>
    </location>
</feature>
<feature type="active site" description="Cysteine persulfide intermediate" evidence="1">
    <location>
        <position position="107"/>
    </location>
</feature>
<gene>
    <name evidence="1" type="primary">fdhD</name>
    <name type="ordered locus">USA300HOU_2262</name>
</gene>
<dbReference type="EMBL" id="CP000730">
    <property type="protein sequence ID" value="ABX30255.1"/>
    <property type="molecule type" value="Genomic_DNA"/>
</dbReference>
<dbReference type="RefSeq" id="WP_001030825.1">
    <property type="nucleotide sequence ID" value="NC_010079.1"/>
</dbReference>
<dbReference type="SMR" id="A8Z378"/>
<dbReference type="KEGG" id="sax:USA300HOU_2262"/>
<dbReference type="HOGENOM" id="CLU_056887_4_1_9"/>
<dbReference type="GO" id="GO:0005737">
    <property type="term" value="C:cytoplasm"/>
    <property type="evidence" value="ECO:0007669"/>
    <property type="project" value="UniProtKB-SubCell"/>
</dbReference>
<dbReference type="GO" id="GO:0097163">
    <property type="term" value="F:sulfur carrier activity"/>
    <property type="evidence" value="ECO:0007669"/>
    <property type="project" value="UniProtKB-UniRule"/>
</dbReference>
<dbReference type="GO" id="GO:0016783">
    <property type="term" value="F:sulfurtransferase activity"/>
    <property type="evidence" value="ECO:0007669"/>
    <property type="project" value="InterPro"/>
</dbReference>
<dbReference type="GO" id="GO:0006777">
    <property type="term" value="P:Mo-molybdopterin cofactor biosynthetic process"/>
    <property type="evidence" value="ECO:0007669"/>
    <property type="project" value="UniProtKB-UniRule"/>
</dbReference>
<dbReference type="Gene3D" id="3.10.20.10">
    <property type="match status" value="1"/>
</dbReference>
<dbReference type="Gene3D" id="3.40.140.10">
    <property type="entry name" value="Cytidine Deaminase, domain 2"/>
    <property type="match status" value="1"/>
</dbReference>
<dbReference type="HAMAP" id="MF_00187">
    <property type="entry name" value="FdhD"/>
    <property type="match status" value="1"/>
</dbReference>
<dbReference type="InterPro" id="IPR016193">
    <property type="entry name" value="Cytidine_deaminase-like"/>
</dbReference>
<dbReference type="InterPro" id="IPR003786">
    <property type="entry name" value="FdhD"/>
</dbReference>
<dbReference type="NCBIfam" id="TIGR00129">
    <property type="entry name" value="fdhD_narQ"/>
    <property type="match status" value="1"/>
</dbReference>
<dbReference type="PANTHER" id="PTHR30592">
    <property type="entry name" value="FORMATE DEHYDROGENASE"/>
    <property type="match status" value="1"/>
</dbReference>
<dbReference type="PANTHER" id="PTHR30592:SF1">
    <property type="entry name" value="SULFUR CARRIER PROTEIN FDHD"/>
    <property type="match status" value="1"/>
</dbReference>
<dbReference type="Pfam" id="PF02634">
    <property type="entry name" value="FdhD-NarQ"/>
    <property type="match status" value="1"/>
</dbReference>
<dbReference type="PIRSF" id="PIRSF015626">
    <property type="entry name" value="FdhD"/>
    <property type="match status" value="1"/>
</dbReference>
<dbReference type="SUPFAM" id="SSF53927">
    <property type="entry name" value="Cytidine deaminase-like"/>
    <property type="match status" value="1"/>
</dbReference>
<name>FDHD_STAAT</name>
<keyword id="KW-0963">Cytoplasm</keyword>
<keyword id="KW-0501">Molybdenum cofactor biosynthesis</keyword>
<accession>A8Z378</accession>
<sequence length="265" mass="29416">MNKDVSLGQPIVRYEDGKLFNTTDQYVTEFPLTIMVNGEEFATVICSPTNLEELVIGFLASEGAILKRDELKSVLIDDSKGFAHVELNKDLGDRFQYSTKRMIASCCGKSREFYFQNDAAIAKTSMSKITLTPMQIINMMTRLQSASHIYQETGGLHNAAISDGLTFFVHRQDIGRHNALDKLYGFCIQRHITVRDKVLIFSGRISSEILIKAAKIGVGVILSKSAPTTLAVTLANDLNITAVGFIRNGGFNIYSHPERIIDSEQ</sequence>
<proteinExistence type="inferred from homology"/>
<reference key="1">
    <citation type="journal article" date="2007" name="BMC Microbiol.">
        <title>Subtle genetic changes enhance virulence of methicillin resistant and sensitive Staphylococcus aureus.</title>
        <authorList>
            <person name="Highlander S.K."/>
            <person name="Hulten K.G."/>
            <person name="Qin X."/>
            <person name="Jiang H."/>
            <person name="Yerrapragada S."/>
            <person name="Mason E.O. Jr."/>
            <person name="Shang Y."/>
            <person name="Williams T.M."/>
            <person name="Fortunov R.M."/>
            <person name="Liu Y."/>
            <person name="Igboeli O."/>
            <person name="Petrosino J."/>
            <person name="Tirumalai M."/>
            <person name="Uzman A."/>
            <person name="Fox G.E."/>
            <person name="Cardenas A.M."/>
            <person name="Muzny D.M."/>
            <person name="Hemphill L."/>
            <person name="Ding Y."/>
            <person name="Dugan S."/>
            <person name="Blyth P.R."/>
            <person name="Buhay C.J."/>
            <person name="Dinh H.H."/>
            <person name="Hawes A.C."/>
            <person name="Holder M."/>
            <person name="Kovar C.L."/>
            <person name="Lee S.L."/>
            <person name="Liu W."/>
            <person name="Nazareth L.V."/>
            <person name="Wang Q."/>
            <person name="Zhou J."/>
            <person name="Kaplan S.L."/>
            <person name="Weinstock G.M."/>
        </authorList>
    </citation>
    <scope>NUCLEOTIDE SEQUENCE [LARGE SCALE GENOMIC DNA]</scope>
    <source>
        <strain>USA300 / TCH1516</strain>
    </source>
</reference>